<feature type="chain" id="PRO_0000312575" description="Zinc transporter 6">
    <location>
        <begin position="1"/>
        <end position="460"/>
    </location>
</feature>
<feature type="topological domain" description="Cytoplasmic" evidence="2">
    <location>
        <begin position="1"/>
        <end position="33"/>
    </location>
</feature>
<feature type="transmembrane region" description="Helical" evidence="2">
    <location>
        <begin position="34"/>
        <end position="54"/>
    </location>
</feature>
<feature type="topological domain" description="Extracellular" evidence="2">
    <location>
        <begin position="55"/>
        <end position="64"/>
    </location>
</feature>
<feature type="transmembrane region" description="Helical" evidence="2">
    <location>
        <begin position="65"/>
        <end position="85"/>
    </location>
</feature>
<feature type="topological domain" description="Cytoplasmic" evidence="2">
    <location>
        <begin position="86"/>
        <end position="98"/>
    </location>
</feature>
<feature type="transmembrane region" description="Helical" evidence="2">
    <location>
        <begin position="99"/>
        <end position="119"/>
    </location>
</feature>
<feature type="topological domain" description="Extracellular" evidence="2">
    <location>
        <begin position="120"/>
        <end position="134"/>
    </location>
</feature>
<feature type="transmembrane region" description="Helical" evidence="2">
    <location>
        <begin position="135"/>
        <end position="155"/>
    </location>
</feature>
<feature type="topological domain" description="Cytoplasmic" evidence="2">
    <location>
        <begin position="156"/>
        <end position="200"/>
    </location>
</feature>
<feature type="transmembrane region" description="Helical" evidence="2">
    <location>
        <begin position="201"/>
        <end position="221"/>
    </location>
</feature>
<feature type="topological domain" description="Extracellular" evidence="2">
    <location>
        <begin position="222"/>
        <end position="228"/>
    </location>
</feature>
<feature type="transmembrane region" description="Helical" evidence="2">
    <location>
        <begin position="229"/>
        <end position="249"/>
    </location>
</feature>
<feature type="topological domain" description="Cytoplasmic" evidence="2">
    <location>
        <begin position="250"/>
        <end position="460"/>
    </location>
</feature>
<feature type="region of interest" description="Disordered" evidence="3">
    <location>
        <begin position="372"/>
        <end position="392"/>
    </location>
</feature>
<protein>
    <recommendedName>
        <fullName>Zinc transporter 6</fullName>
        <shortName>ZnT-6</shortName>
    </recommendedName>
    <alternativeName>
        <fullName>Solute carrier family 30 member 6</fullName>
    </alternativeName>
</protein>
<reference key="1">
    <citation type="journal article" date="2005" name="J. Biol. Chem.">
        <title>Two different zinc transport complexes of cation diffusion facilitator proteins localized in the secretory pathway operate to activate alkaline phosphatases in vertebrate cells.</title>
        <authorList>
            <person name="Suzuki T."/>
            <person name="Ishihara K."/>
            <person name="Migaki H."/>
            <person name="Ishihara K."/>
            <person name="Nagao M."/>
            <person name="Yamaguchi-Iwai Y."/>
            <person name="Kambe T."/>
        </authorList>
    </citation>
    <scope>NUCLEOTIDE SEQUENCE [MRNA]</scope>
    <scope>FUNCTION</scope>
</reference>
<reference key="2">
    <citation type="journal article" date="2005" name="Genome Biol.">
        <title>Full-length cDNAs from chicken bursal lymphocytes to facilitate gene function analysis.</title>
        <authorList>
            <person name="Caldwell R.B."/>
            <person name="Kierzek A.M."/>
            <person name="Arakawa H."/>
            <person name="Bezzubov Y."/>
            <person name="Zaim J."/>
            <person name="Fiedler P."/>
            <person name="Kutter S."/>
            <person name="Blagodatski A."/>
            <person name="Kostovska D."/>
            <person name="Koter M."/>
            <person name="Plachy J."/>
            <person name="Carninci P."/>
            <person name="Hayashizaki Y."/>
            <person name="Buerstedde J.-M."/>
        </authorList>
    </citation>
    <scope>NUCLEOTIDE SEQUENCE [LARGE SCALE MRNA]</scope>
    <source>
        <strain>CB</strain>
        <tissue>Bursa of Fabricius</tissue>
    </source>
</reference>
<keyword id="KW-0333">Golgi apparatus</keyword>
<keyword id="KW-0406">Ion transport</keyword>
<keyword id="KW-0472">Membrane</keyword>
<keyword id="KW-1185">Reference proteome</keyword>
<keyword id="KW-0812">Transmembrane</keyword>
<keyword id="KW-1133">Transmembrane helix</keyword>
<keyword id="KW-0813">Transport</keyword>
<keyword id="KW-0862">Zinc</keyword>
<keyword id="KW-0864">Zinc transport</keyword>
<evidence type="ECO:0000250" key="1">
    <source>
        <dbReference type="UniProtKB" id="Q6NXT4"/>
    </source>
</evidence>
<evidence type="ECO:0000255" key="2"/>
<evidence type="ECO:0000256" key="3">
    <source>
        <dbReference type="SAM" id="MobiDB-lite"/>
    </source>
</evidence>
<evidence type="ECO:0000305" key="4"/>
<evidence type="ECO:0000305" key="5">
    <source>
    </source>
</evidence>
<sequence>MGTIHLFRKSQRSLVGKLTHEFRLVAADRRSWKILLFGAINLICIGFLLMWCSSTNSIALTAYTYLTIFDLFSLITCLISYWVMVKKPSPVYSFGFERFEVLAVFASTVLAQLGALFILKESAERFLEQPEIHTGRLLVGTFVALFFNLFTMLSVRNKPFAYVSEAASTSWLQEHVADLSRSICGIIPGLSSIFLPRMNPFVLIDIAGALALCITYMLIEINNYYAVDTASAIAIALMTFGTMYPMSVYSGKVLLQTTPPHVFGQLDKLLREVSTLDGVLEVRNEHFWTLGFGTLAGSVHVRIRRDANEQMVLAHVTNRLYTLVSTLTVQIFKDDWIRPTLSSVPIANNMLNLSDHHVITMPSLKAADNLNPVTSTPAKPSSPPPEFSFNTPGKNVNPVILLNTQTRPYGLGLNHGSTPYSSVLNQGFGIPGMGATQGFRTGFTNVPSRYGTNTRGQSRP</sequence>
<accession>Q5ZIH3</accession>
<name>ZNT6_CHICK</name>
<proteinExistence type="evidence at transcript level"/>
<comment type="function">
    <text evidence="1 5">Has probably no intrinsic transporter activity but together with SLC30A5 forms a functional zinc ion:proton antiporter heterodimer, mediating zinc entry into the lumen of organelles along the secretory pathway (Probable). As part of that zinc ion:proton antiporter, contributes to zinc ion homeostasis within the early secretory pathway and regulates the activation and folding of enzymes like alkaline phosphatases and enzymes involved in phosphatidylinositol glycan anchor biosynthesis (By similarity).</text>
</comment>
<comment type="subunit">
    <text evidence="1">Heterodimer with SLC30A5; form a functional zinc ion transmembrane transporter.</text>
</comment>
<comment type="subcellular location">
    <subcellularLocation>
        <location evidence="1">Golgi apparatus</location>
        <location evidence="1">trans-Golgi network membrane</location>
        <topology evidence="2">Multi-pass membrane protein</topology>
    </subcellularLocation>
</comment>
<comment type="similarity">
    <text evidence="4">Belongs to the cation diffusion facilitator (CDF) transporter (TC 2.A.4) family. SLC30A subfamily.</text>
</comment>
<comment type="caution">
    <text evidence="1">Hydrophilic histidine residues that participate to zinc binding in transporters of the family are not conserved in SLC30A6.</text>
</comment>
<dbReference type="EMBL" id="AJ720811">
    <property type="protein sequence ID" value="CAG32470.1"/>
    <property type="molecule type" value="mRNA"/>
</dbReference>
<dbReference type="EMBL" id="AY986776">
    <property type="protein sequence ID" value="AAY53770.1"/>
    <property type="molecule type" value="mRNA"/>
</dbReference>
<dbReference type="RefSeq" id="NP_001006402.1">
    <property type="nucleotide sequence ID" value="NM_001006402.2"/>
</dbReference>
<dbReference type="SMR" id="Q5ZIH3"/>
<dbReference type="FunCoup" id="Q5ZIH3">
    <property type="interactions" value="1291"/>
</dbReference>
<dbReference type="STRING" id="9031.ENSGALP00000017255"/>
<dbReference type="GlyGen" id="Q5ZIH3">
    <property type="glycosylation" value="1 site"/>
</dbReference>
<dbReference type="PaxDb" id="9031-ENSGALP00000017255"/>
<dbReference type="Ensembl" id="ENSGALT00010017210.1">
    <property type="protein sequence ID" value="ENSGALP00010009565.1"/>
    <property type="gene ID" value="ENSGALG00010007203.1"/>
</dbReference>
<dbReference type="GeneID" id="421480"/>
<dbReference type="KEGG" id="gga:421480"/>
<dbReference type="CTD" id="55676"/>
<dbReference type="VEuPathDB" id="HostDB:geneid_421480"/>
<dbReference type="eggNOG" id="KOG1484">
    <property type="taxonomic scope" value="Eukaryota"/>
</dbReference>
<dbReference type="GeneTree" id="ENSGT00940000159934"/>
<dbReference type="HOGENOM" id="CLU_034201_0_0_1"/>
<dbReference type="InParanoid" id="Q5ZIH3"/>
<dbReference type="OMA" id="NIVCTGF"/>
<dbReference type="OrthoDB" id="5382797at2759"/>
<dbReference type="PhylomeDB" id="Q5ZIH3"/>
<dbReference type="TreeFam" id="TF313167"/>
<dbReference type="PRO" id="PR:Q5ZIH3"/>
<dbReference type="Proteomes" id="UP000000539">
    <property type="component" value="Chromosome 3"/>
</dbReference>
<dbReference type="GO" id="GO:0005794">
    <property type="term" value="C:Golgi apparatus"/>
    <property type="evidence" value="ECO:0000318"/>
    <property type="project" value="GO_Central"/>
</dbReference>
<dbReference type="GO" id="GO:0032588">
    <property type="term" value="C:trans-Golgi network membrane"/>
    <property type="evidence" value="ECO:0000250"/>
    <property type="project" value="UniProtKB"/>
</dbReference>
<dbReference type="GO" id="GO:0005385">
    <property type="term" value="F:zinc ion transmembrane transporter activity"/>
    <property type="evidence" value="ECO:0000315"/>
    <property type="project" value="UniProtKB"/>
</dbReference>
<dbReference type="GO" id="GO:0071579">
    <property type="term" value="P:regulation of zinc ion transport"/>
    <property type="evidence" value="ECO:0007669"/>
    <property type="project" value="Ensembl"/>
</dbReference>
<dbReference type="GO" id="GO:1904257">
    <property type="term" value="P:zinc ion import into Golgi lumen"/>
    <property type="evidence" value="ECO:0000315"/>
    <property type="project" value="UniProtKB"/>
</dbReference>
<dbReference type="GO" id="GO:0006829">
    <property type="term" value="P:zinc ion transport"/>
    <property type="evidence" value="ECO:0000318"/>
    <property type="project" value="GO_Central"/>
</dbReference>
<dbReference type="FunFam" id="1.20.1510.10:FF:000009">
    <property type="entry name" value="zinc transporter 6 isoform X1"/>
    <property type="match status" value="1"/>
</dbReference>
<dbReference type="Gene3D" id="1.20.1510.10">
    <property type="entry name" value="Cation efflux protein transmembrane domain"/>
    <property type="match status" value="1"/>
</dbReference>
<dbReference type="InterPro" id="IPR002524">
    <property type="entry name" value="Cation_efflux"/>
</dbReference>
<dbReference type="InterPro" id="IPR027469">
    <property type="entry name" value="Cation_efflux_TMD_sf"/>
</dbReference>
<dbReference type="InterPro" id="IPR052005">
    <property type="entry name" value="CDF_SLC30A"/>
</dbReference>
<dbReference type="NCBIfam" id="TIGR01297">
    <property type="entry name" value="CDF"/>
    <property type="match status" value="1"/>
</dbReference>
<dbReference type="PANTHER" id="PTHR46531">
    <property type="entry name" value="ZINC TRANSPORTER 6"/>
    <property type="match status" value="1"/>
</dbReference>
<dbReference type="PANTHER" id="PTHR46531:SF1">
    <property type="entry name" value="ZINC TRANSPORTER 6"/>
    <property type="match status" value="1"/>
</dbReference>
<dbReference type="Pfam" id="PF01545">
    <property type="entry name" value="Cation_efflux"/>
    <property type="match status" value="1"/>
</dbReference>
<dbReference type="SUPFAM" id="SSF161111">
    <property type="entry name" value="Cation efflux protein transmembrane domain-like"/>
    <property type="match status" value="1"/>
</dbReference>
<organism>
    <name type="scientific">Gallus gallus</name>
    <name type="common">Chicken</name>
    <dbReference type="NCBI Taxonomy" id="9031"/>
    <lineage>
        <taxon>Eukaryota</taxon>
        <taxon>Metazoa</taxon>
        <taxon>Chordata</taxon>
        <taxon>Craniata</taxon>
        <taxon>Vertebrata</taxon>
        <taxon>Euteleostomi</taxon>
        <taxon>Archelosauria</taxon>
        <taxon>Archosauria</taxon>
        <taxon>Dinosauria</taxon>
        <taxon>Saurischia</taxon>
        <taxon>Theropoda</taxon>
        <taxon>Coelurosauria</taxon>
        <taxon>Aves</taxon>
        <taxon>Neognathae</taxon>
        <taxon>Galloanserae</taxon>
        <taxon>Galliformes</taxon>
        <taxon>Phasianidae</taxon>
        <taxon>Phasianinae</taxon>
        <taxon>Gallus</taxon>
    </lineage>
</organism>
<gene>
    <name type="primary">SLC30A6</name>
    <name type="synonym">ZNT6</name>
    <name type="ORF">RCJMB04_26e2</name>
</gene>